<proteinExistence type="inferred from homology"/>
<gene>
    <name evidence="1" type="primary">mtnC</name>
    <name type="ordered locus">Syncc9605_0489</name>
</gene>
<sequence length="249" mass="28621">MNQQHLLLDIEGTTCPVRFVSDTLFPFAKKELSRYITQNWDKRPHSKSIRAAWKEWMDDQSAESMIIKQQVTQCEIEEVEGLIQYLKHLISIDRKSTALKDLQGKIWEYGYGNGELKSQLFPETAVCLRQWHEQGLTLSVYSSGSIQAQKLLYRHSLNGNLEDLFSHWFDTHTGPKKSAESYTTIAKQLQSSPNKIWFVSDNGDECNSARLAGMHTLFSLREGNPDRDPRDHKVVHSLREVSALLIAEQ</sequence>
<name>MTNC_SYNSC</name>
<comment type="function">
    <text evidence="1">Bifunctional enzyme that catalyzes the enolization of 2,3-diketo-5-methylthiopentyl-1-phosphate (DK-MTP-1-P) into the intermediate 2-hydroxy-3-keto-5-methylthiopentenyl-1-phosphate (HK-MTPenyl-1-P), which is then dephosphorylated to form the acireductone 1,2-dihydroxy-3-keto-5-methylthiopentene (DHK-MTPene).</text>
</comment>
<comment type="catalytic activity">
    <reaction evidence="1">
        <text>5-methylsulfanyl-2,3-dioxopentyl phosphate + H2O = 1,2-dihydroxy-5-(methylsulfanyl)pent-1-en-3-one + phosphate</text>
        <dbReference type="Rhea" id="RHEA:21700"/>
        <dbReference type="ChEBI" id="CHEBI:15377"/>
        <dbReference type="ChEBI" id="CHEBI:43474"/>
        <dbReference type="ChEBI" id="CHEBI:49252"/>
        <dbReference type="ChEBI" id="CHEBI:58828"/>
        <dbReference type="EC" id="3.1.3.77"/>
    </reaction>
</comment>
<comment type="cofactor">
    <cofactor evidence="1">
        <name>Mg(2+)</name>
        <dbReference type="ChEBI" id="CHEBI:18420"/>
    </cofactor>
    <text evidence="1">Binds 1 Mg(2+) ion per subunit.</text>
</comment>
<comment type="pathway">
    <text evidence="1">Amino-acid biosynthesis; L-methionine biosynthesis via salvage pathway; L-methionine from S-methyl-5-thio-alpha-D-ribose 1-phosphate: step 3/6.</text>
</comment>
<comment type="pathway">
    <text evidence="1">Amino-acid biosynthesis; L-methionine biosynthesis via salvage pathway; L-methionine from S-methyl-5-thio-alpha-D-ribose 1-phosphate: step 4/6.</text>
</comment>
<comment type="subunit">
    <text evidence="1">Monomer.</text>
</comment>
<comment type="similarity">
    <text evidence="1">Belongs to the HAD-like hydrolase superfamily. MasA/MtnC family.</text>
</comment>
<comment type="sequence caution" evidence="2">
    <conflict type="erroneous initiation">
        <sequence resource="EMBL-CDS" id="ABB34263"/>
    </conflict>
</comment>
<protein>
    <recommendedName>
        <fullName evidence="1">Enolase-phosphatase E1</fullName>
        <ecNumber evidence="1">3.1.3.77</ecNumber>
    </recommendedName>
    <alternativeName>
        <fullName evidence="1">2,3-diketo-5-methylthio-1-phosphopentane phosphatase</fullName>
    </alternativeName>
</protein>
<evidence type="ECO:0000255" key="1">
    <source>
        <dbReference type="HAMAP-Rule" id="MF_01681"/>
    </source>
</evidence>
<evidence type="ECO:0000305" key="2"/>
<dbReference type="EC" id="3.1.3.77" evidence="1"/>
<dbReference type="EMBL" id="CP000110">
    <property type="protein sequence ID" value="ABB34263.1"/>
    <property type="status" value="ALT_INIT"/>
    <property type="molecule type" value="Genomic_DNA"/>
</dbReference>
<dbReference type="RefSeq" id="WP_041435426.1">
    <property type="nucleotide sequence ID" value="NC_007516.1"/>
</dbReference>
<dbReference type="SMR" id="Q3AMB9"/>
<dbReference type="STRING" id="110662.Syncc9605_0489"/>
<dbReference type="KEGG" id="syd:Syncc9605_0489"/>
<dbReference type="eggNOG" id="COG4229">
    <property type="taxonomic scope" value="Bacteria"/>
</dbReference>
<dbReference type="HOGENOM" id="CLU_023273_0_0_3"/>
<dbReference type="OrthoDB" id="9797416at2"/>
<dbReference type="UniPathway" id="UPA00904">
    <property type="reaction ID" value="UER00876"/>
</dbReference>
<dbReference type="UniPathway" id="UPA00904">
    <property type="reaction ID" value="UER00877"/>
</dbReference>
<dbReference type="GO" id="GO:0043715">
    <property type="term" value="F:2,3-diketo-5-methylthiopentyl-1-phosphate enolase activity"/>
    <property type="evidence" value="ECO:0007669"/>
    <property type="project" value="UniProtKB-UniRule"/>
</dbReference>
<dbReference type="GO" id="GO:0043716">
    <property type="term" value="F:2-hydroxy-3-keto-5-methylthiopentenyl-1-phosphate phosphatase activity"/>
    <property type="evidence" value="ECO:0007669"/>
    <property type="project" value="UniProtKB-UniRule"/>
</dbReference>
<dbReference type="GO" id="GO:0043874">
    <property type="term" value="F:acireductone synthase activity"/>
    <property type="evidence" value="ECO:0007669"/>
    <property type="project" value="UniProtKB-EC"/>
</dbReference>
<dbReference type="GO" id="GO:0000287">
    <property type="term" value="F:magnesium ion binding"/>
    <property type="evidence" value="ECO:0007669"/>
    <property type="project" value="UniProtKB-UniRule"/>
</dbReference>
<dbReference type="GO" id="GO:0019509">
    <property type="term" value="P:L-methionine salvage from methylthioadenosine"/>
    <property type="evidence" value="ECO:0007669"/>
    <property type="project" value="UniProtKB-UniRule"/>
</dbReference>
<dbReference type="CDD" id="cd01629">
    <property type="entry name" value="HAD_EP"/>
    <property type="match status" value="1"/>
</dbReference>
<dbReference type="Gene3D" id="1.10.720.60">
    <property type="match status" value="1"/>
</dbReference>
<dbReference type="Gene3D" id="3.40.50.1000">
    <property type="entry name" value="HAD superfamily/HAD-like"/>
    <property type="match status" value="1"/>
</dbReference>
<dbReference type="HAMAP" id="MF_01681">
    <property type="entry name" value="Salvage_MtnC"/>
    <property type="match status" value="1"/>
</dbReference>
<dbReference type="InterPro" id="IPR023943">
    <property type="entry name" value="Enolase-ppase_E1"/>
</dbReference>
<dbReference type="InterPro" id="IPR036412">
    <property type="entry name" value="HAD-like_sf"/>
</dbReference>
<dbReference type="InterPro" id="IPR023214">
    <property type="entry name" value="HAD_sf"/>
</dbReference>
<dbReference type="NCBIfam" id="TIGR01691">
    <property type="entry name" value="enolase-ppase"/>
    <property type="match status" value="1"/>
</dbReference>
<dbReference type="PANTHER" id="PTHR20371">
    <property type="entry name" value="ENOLASE-PHOSPHATASE E1"/>
    <property type="match status" value="1"/>
</dbReference>
<dbReference type="PANTHER" id="PTHR20371:SF1">
    <property type="entry name" value="ENOLASE-PHOSPHATASE E1"/>
    <property type="match status" value="1"/>
</dbReference>
<dbReference type="Pfam" id="PF00702">
    <property type="entry name" value="Hydrolase"/>
    <property type="match status" value="1"/>
</dbReference>
<dbReference type="SFLD" id="SFLDG01129">
    <property type="entry name" value="C1.5:_HAD__Beta-PGM__Phosphata"/>
    <property type="match status" value="1"/>
</dbReference>
<dbReference type="SFLD" id="SFLDF00044">
    <property type="entry name" value="enolase-phosphatase"/>
    <property type="match status" value="1"/>
</dbReference>
<dbReference type="SUPFAM" id="SSF56784">
    <property type="entry name" value="HAD-like"/>
    <property type="match status" value="1"/>
</dbReference>
<reference key="1">
    <citation type="submission" date="2005-07" db="EMBL/GenBank/DDBJ databases">
        <title>Complete sequence of Synechococcus sp. CC9605.</title>
        <authorList>
            <consortium name="US DOE Joint Genome Institute"/>
            <person name="Copeland A."/>
            <person name="Lucas S."/>
            <person name="Lapidus A."/>
            <person name="Barry K."/>
            <person name="Detter J.C."/>
            <person name="Glavina T."/>
            <person name="Hammon N."/>
            <person name="Israni S."/>
            <person name="Pitluck S."/>
            <person name="Schmutz J."/>
            <person name="Martinez M."/>
            <person name="Larimer F."/>
            <person name="Land M."/>
            <person name="Kyrpides N."/>
            <person name="Ivanova N."/>
            <person name="Richardson P."/>
        </authorList>
    </citation>
    <scope>NUCLEOTIDE SEQUENCE [LARGE SCALE GENOMIC DNA]</scope>
    <source>
        <strain>CC9605</strain>
    </source>
</reference>
<organism>
    <name type="scientific">Synechococcus sp. (strain CC9605)</name>
    <dbReference type="NCBI Taxonomy" id="110662"/>
    <lineage>
        <taxon>Bacteria</taxon>
        <taxon>Bacillati</taxon>
        <taxon>Cyanobacteriota</taxon>
        <taxon>Cyanophyceae</taxon>
        <taxon>Synechococcales</taxon>
        <taxon>Synechococcaceae</taxon>
        <taxon>Synechococcus</taxon>
    </lineage>
</organism>
<keyword id="KW-0028">Amino-acid biosynthesis</keyword>
<keyword id="KW-0378">Hydrolase</keyword>
<keyword id="KW-0460">Magnesium</keyword>
<keyword id="KW-0479">Metal-binding</keyword>
<keyword id="KW-0486">Methionine biosynthesis</keyword>
<accession>Q3AMB9</accession>
<feature type="chain" id="PRO_0000357421" description="Enolase-phosphatase E1">
    <location>
        <begin position="1"/>
        <end position="249"/>
    </location>
</feature>